<comment type="function">
    <text evidence="1">Mitochondrial intermembrane chaperone that participates in the import and insertion of multi-pass transmembrane proteins into the mitochondrial inner membrane. Also required for the transfer of beta-barrel precursors from the TOM complex to the sorting and assembly machinery (SAM complex) of the outer membrane. Acts as a chaperone-like protein that protects the hydrophobic precursors from aggregation and guide them through the mitochondrial intermembrane space (By similarity).</text>
</comment>
<comment type="subunit">
    <text evidence="1">Heterohexamer; composed of 3 copies of TIM9 and 3 copies of TIM10, named soluble 70 kDa complex. Associates with the TIM22 complex, whose core is composed of TIM22 and TIM54. Interacts with the transmembrane regions of multi-pass transmembrane proteins in transit (By similarity).</text>
</comment>
<comment type="subcellular location">
    <subcellularLocation>
        <location evidence="1">Mitochondrion inner membrane</location>
        <topology evidence="1">Peripheral membrane protein</topology>
        <orientation evidence="1">Intermembrane side</orientation>
    </subcellularLocation>
</comment>
<comment type="domain">
    <text evidence="1">The twin CX3C motif contains 4 conserved Cys residues that form 2 disulfide bonds in the mitochondrial intermembrane space. However, during the transit of TIM9 from cytoplasm into mitochondrion, the Cys residues probably coordinate zinc, thereby preventing folding and allowing its transfer across mitochondrial outer membrane (By similarity).</text>
</comment>
<comment type="similarity">
    <text evidence="2">Belongs to the small Tim family.</text>
</comment>
<reference key="1">
    <citation type="journal article" date="2005" name="Nature">
        <title>Genomic sequence of the pathogenic and allergenic filamentous fungus Aspergillus fumigatus.</title>
        <authorList>
            <person name="Nierman W.C."/>
            <person name="Pain A."/>
            <person name="Anderson M.J."/>
            <person name="Wortman J.R."/>
            <person name="Kim H.S."/>
            <person name="Arroyo J."/>
            <person name="Berriman M."/>
            <person name="Abe K."/>
            <person name="Archer D.B."/>
            <person name="Bermejo C."/>
            <person name="Bennett J.W."/>
            <person name="Bowyer P."/>
            <person name="Chen D."/>
            <person name="Collins M."/>
            <person name="Coulsen R."/>
            <person name="Davies R."/>
            <person name="Dyer P.S."/>
            <person name="Farman M.L."/>
            <person name="Fedorova N."/>
            <person name="Fedorova N.D."/>
            <person name="Feldblyum T.V."/>
            <person name="Fischer R."/>
            <person name="Fosker N."/>
            <person name="Fraser A."/>
            <person name="Garcia J.L."/>
            <person name="Garcia M.J."/>
            <person name="Goble A."/>
            <person name="Goldman G.H."/>
            <person name="Gomi K."/>
            <person name="Griffith-Jones S."/>
            <person name="Gwilliam R."/>
            <person name="Haas B.J."/>
            <person name="Haas H."/>
            <person name="Harris D.E."/>
            <person name="Horiuchi H."/>
            <person name="Huang J."/>
            <person name="Humphray S."/>
            <person name="Jimenez J."/>
            <person name="Keller N."/>
            <person name="Khouri H."/>
            <person name="Kitamoto K."/>
            <person name="Kobayashi T."/>
            <person name="Konzack S."/>
            <person name="Kulkarni R."/>
            <person name="Kumagai T."/>
            <person name="Lafton A."/>
            <person name="Latge J.-P."/>
            <person name="Li W."/>
            <person name="Lord A."/>
            <person name="Lu C."/>
            <person name="Majoros W.H."/>
            <person name="May G.S."/>
            <person name="Miller B.L."/>
            <person name="Mohamoud Y."/>
            <person name="Molina M."/>
            <person name="Monod M."/>
            <person name="Mouyna I."/>
            <person name="Mulligan S."/>
            <person name="Murphy L.D."/>
            <person name="O'Neil S."/>
            <person name="Paulsen I."/>
            <person name="Penalva M.A."/>
            <person name="Pertea M."/>
            <person name="Price C."/>
            <person name="Pritchard B.L."/>
            <person name="Quail M.A."/>
            <person name="Rabbinowitsch E."/>
            <person name="Rawlins N."/>
            <person name="Rajandream M.A."/>
            <person name="Reichard U."/>
            <person name="Renauld H."/>
            <person name="Robson G.D."/>
            <person name="Rodriguez de Cordoba S."/>
            <person name="Rodriguez-Pena J.M."/>
            <person name="Ronning C.M."/>
            <person name="Rutter S."/>
            <person name="Salzberg S.L."/>
            <person name="Sanchez M."/>
            <person name="Sanchez-Ferrero J.C."/>
            <person name="Saunders D."/>
            <person name="Seeger K."/>
            <person name="Squares R."/>
            <person name="Squares S."/>
            <person name="Takeuchi M."/>
            <person name="Tekaia F."/>
            <person name="Turner G."/>
            <person name="Vazquez de Aldana C.R."/>
            <person name="Weidman J."/>
            <person name="White O."/>
            <person name="Woodward J.R."/>
            <person name="Yu J.-H."/>
            <person name="Fraser C.M."/>
            <person name="Galagan J.E."/>
            <person name="Asai K."/>
            <person name="Machida M."/>
            <person name="Hall N."/>
            <person name="Barrell B.G."/>
            <person name="Denning D.W."/>
        </authorList>
    </citation>
    <scope>NUCLEOTIDE SEQUENCE [LARGE SCALE GENOMIC DNA]</scope>
    <source>
        <strain>ATCC MYA-4609 / CBS 101355 / FGSC A1100 / Af293</strain>
    </source>
</reference>
<keyword id="KW-0143">Chaperone</keyword>
<keyword id="KW-1015">Disulfide bond</keyword>
<keyword id="KW-0472">Membrane</keyword>
<keyword id="KW-0479">Metal-binding</keyword>
<keyword id="KW-0496">Mitochondrion</keyword>
<keyword id="KW-0999">Mitochondrion inner membrane</keyword>
<keyword id="KW-0653">Protein transport</keyword>
<keyword id="KW-1185">Reference proteome</keyword>
<keyword id="KW-0811">Translocation</keyword>
<keyword id="KW-0813">Transport</keyword>
<keyword id="KW-0862">Zinc</keyword>
<proteinExistence type="inferred from homology"/>
<dbReference type="EMBL" id="AAHF01000008">
    <property type="protein sequence ID" value="EAL87203.1"/>
    <property type="molecule type" value="Genomic_DNA"/>
</dbReference>
<dbReference type="RefSeq" id="XP_749241.1">
    <property type="nucleotide sequence ID" value="XM_744148.1"/>
</dbReference>
<dbReference type="SMR" id="Q4WIQ2"/>
<dbReference type="FunCoup" id="Q4WIQ2">
    <property type="interactions" value="902"/>
</dbReference>
<dbReference type="STRING" id="330879.Q4WIQ2"/>
<dbReference type="EnsemblFungi" id="EAL87203">
    <property type="protein sequence ID" value="EAL87203"/>
    <property type="gene ID" value="AFUA_2G01050"/>
</dbReference>
<dbReference type="GeneID" id="3506854"/>
<dbReference type="KEGG" id="afm:AFUA_2G01050"/>
<dbReference type="VEuPathDB" id="FungiDB:Afu2g01050"/>
<dbReference type="eggNOG" id="KOG3479">
    <property type="taxonomic scope" value="Eukaryota"/>
</dbReference>
<dbReference type="HOGENOM" id="CLU_141397_3_0_1"/>
<dbReference type="InParanoid" id="Q4WIQ2"/>
<dbReference type="OMA" id="QDFLRMY"/>
<dbReference type="OrthoDB" id="1551503at2759"/>
<dbReference type="Proteomes" id="UP000002530">
    <property type="component" value="Chromosome 2"/>
</dbReference>
<dbReference type="GO" id="GO:0005743">
    <property type="term" value="C:mitochondrial inner membrane"/>
    <property type="evidence" value="ECO:0000318"/>
    <property type="project" value="GO_Central"/>
</dbReference>
<dbReference type="GO" id="GO:0046872">
    <property type="term" value="F:metal ion binding"/>
    <property type="evidence" value="ECO:0007669"/>
    <property type="project" value="UniProtKB-KW"/>
</dbReference>
<dbReference type="GO" id="GO:0045039">
    <property type="term" value="P:protein insertion into mitochondrial inner membrane"/>
    <property type="evidence" value="ECO:0000318"/>
    <property type="project" value="GO_Central"/>
</dbReference>
<dbReference type="FunFam" id="1.10.287.810:FF:000008">
    <property type="entry name" value="Mitochondrial import inner membrane translocase subunit TIM9"/>
    <property type="match status" value="1"/>
</dbReference>
<dbReference type="Gene3D" id="1.10.287.810">
    <property type="entry name" value="Mitochondrial import inner membrane translocase subunit tim13 like domains"/>
    <property type="match status" value="1"/>
</dbReference>
<dbReference type="InterPro" id="IPR050673">
    <property type="entry name" value="Mito_inner_translocase_sub"/>
</dbReference>
<dbReference type="InterPro" id="IPR004217">
    <property type="entry name" value="Tim10-like"/>
</dbReference>
<dbReference type="InterPro" id="IPR035427">
    <property type="entry name" value="Tim10-like_dom_sf"/>
</dbReference>
<dbReference type="PANTHER" id="PTHR13172">
    <property type="entry name" value="MITOCHONDRIAL IMPORT INNER MEMBRANE TRANSLOCASE SUBUNIT TIM9B"/>
    <property type="match status" value="1"/>
</dbReference>
<dbReference type="Pfam" id="PF02953">
    <property type="entry name" value="zf-Tim10_DDP"/>
    <property type="match status" value="1"/>
</dbReference>
<dbReference type="SUPFAM" id="SSF144122">
    <property type="entry name" value="Tim10-like"/>
    <property type="match status" value="1"/>
</dbReference>
<accession>Q4WIQ2</accession>
<name>TIM9_ASPFU</name>
<evidence type="ECO:0000250" key="1"/>
<evidence type="ECO:0000305" key="2"/>
<organism>
    <name type="scientific">Aspergillus fumigatus (strain ATCC MYA-4609 / CBS 101355 / FGSC A1100 / Af293)</name>
    <name type="common">Neosartorya fumigata</name>
    <dbReference type="NCBI Taxonomy" id="330879"/>
    <lineage>
        <taxon>Eukaryota</taxon>
        <taxon>Fungi</taxon>
        <taxon>Dikarya</taxon>
        <taxon>Ascomycota</taxon>
        <taxon>Pezizomycotina</taxon>
        <taxon>Eurotiomycetes</taxon>
        <taxon>Eurotiomycetidae</taxon>
        <taxon>Eurotiales</taxon>
        <taxon>Aspergillaceae</taxon>
        <taxon>Aspergillus</taxon>
        <taxon>Aspergillus subgen. Fumigati</taxon>
    </lineage>
</organism>
<feature type="chain" id="PRO_0000228040" description="Mitochondrial import inner membrane translocase subunit tim9">
    <location>
        <begin position="1"/>
        <end position="90"/>
    </location>
</feature>
<feature type="short sequence motif" description="Twin CX3C motif">
    <location>
        <begin position="35"/>
        <end position="59"/>
    </location>
</feature>
<feature type="disulfide bond" evidence="1">
    <location>
        <begin position="35"/>
        <end position="59"/>
    </location>
</feature>
<feature type="disulfide bond" evidence="1">
    <location>
        <begin position="39"/>
        <end position="55"/>
    </location>
</feature>
<gene>
    <name type="primary">tim9</name>
    <name type="ORF">AFUA_2G01050</name>
</gene>
<protein>
    <recommendedName>
        <fullName>Mitochondrial import inner membrane translocase subunit tim9</fullName>
    </recommendedName>
</protein>
<sequence>MDGLTAAEQRELASRMERKQLKEFMTMYSKLVQRCFDNCVNDFTTKSLISREEGCIMRCVDKYMKASSRLNERFQEQNAAMMQGGQLPGR</sequence>